<sequence>MSKKDKKEEIKEEVEATEPTTEESVEEVAEETSENKELQEALERAEDFENKYLRAHAEMQNIQRRANEERQSLQRYRSQDLAKAILPSLDNLERALAVEGLTDDVKKGLEMVQESLIQALKEEGVEEVELENFDPNLHMAVQTLDADDDHPADSIAQVLQKGYQLHERLLRPAMVVVYN</sequence>
<name>GRPE_STRMU</name>
<accession>O06941</accession>
<feature type="chain" id="PRO_0000113870" description="Protein GrpE">
    <location>
        <begin position="1"/>
        <end position="179"/>
    </location>
</feature>
<feature type="region of interest" description="Disordered" evidence="2">
    <location>
        <begin position="1"/>
        <end position="40"/>
    </location>
</feature>
<feature type="compositionally biased region" description="Basic and acidic residues" evidence="2">
    <location>
        <begin position="1"/>
        <end position="14"/>
    </location>
</feature>
<feature type="compositionally biased region" description="Acidic residues" evidence="2">
    <location>
        <begin position="15"/>
        <end position="32"/>
    </location>
</feature>
<feature type="sequence conflict" description="In Ref. 1; AAC45611." evidence="3" ref="1">
    <original>I</original>
    <variation>Y</variation>
    <location>
        <position position="10"/>
    </location>
</feature>
<feature type="sequence conflict" description="In Ref. 1; AAC45611." evidence="3" ref="1">
    <original>QNIQRRANEERQSL</original>
    <variation>PKTFSVALMKSDKVC</variation>
    <location>
        <begin position="60"/>
        <end position="73"/>
    </location>
</feature>
<feature type="sequence conflict" description="In Ref. 1; AAC45611." evidence="3" ref="1">
    <original>A</original>
    <variation>R</variation>
    <location>
        <position position="82"/>
    </location>
</feature>
<feature type="sequence conflict" description="In Ref. 1; AAC45611." evidence="3" ref="1">
    <original>P</original>
    <variation>A</variation>
    <location>
        <position position="135"/>
    </location>
</feature>
<feature type="sequence conflict" description="In Ref. 1; AAC45611." evidence="3" ref="1">
    <original>L</original>
    <variation>H</variation>
    <location>
        <position position="159"/>
    </location>
</feature>
<evidence type="ECO:0000255" key="1">
    <source>
        <dbReference type="HAMAP-Rule" id="MF_01151"/>
    </source>
</evidence>
<evidence type="ECO:0000256" key="2">
    <source>
        <dbReference type="SAM" id="MobiDB-lite"/>
    </source>
</evidence>
<evidence type="ECO:0000305" key="3"/>
<protein>
    <recommendedName>
        <fullName evidence="1">Protein GrpE</fullName>
    </recommendedName>
    <alternativeName>
        <fullName evidence="1">HSP-70 cofactor</fullName>
    </alternativeName>
</protein>
<dbReference type="EMBL" id="U78296">
    <property type="protein sequence ID" value="AAC45611.1"/>
    <property type="molecule type" value="Genomic_DNA"/>
</dbReference>
<dbReference type="EMBL" id="AE014133">
    <property type="protein sequence ID" value="AAN57866.1"/>
    <property type="molecule type" value="Genomic_DNA"/>
</dbReference>
<dbReference type="RefSeq" id="NP_720560.1">
    <property type="nucleotide sequence ID" value="NC_004350.2"/>
</dbReference>
<dbReference type="RefSeq" id="WP_002263416.1">
    <property type="nucleotide sequence ID" value="NC_004350.2"/>
</dbReference>
<dbReference type="SMR" id="O06941"/>
<dbReference type="STRING" id="210007.SMU_81"/>
<dbReference type="GeneID" id="93860461"/>
<dbReference type="KEGG" id="smu:SMU_81"/>
<dbReference type="PATRIC" id="fig|210007.7.peg.70"/>
<dbReference type="eggNOG" id="COG0576">
    <property type="taxonomic scope" value="Bacteria"/>
</dbReference>
<dbReference type="HOGENOM" id="CLU_057217_6_3_9"/>
<dbReference type="OrthoDB" id="9812586at2"/>
<dbReference type="PhylomeDB" id="O06941"/>
<dbReference type="Proteomes" id="UP000002512">
    <property type="component" value="Chromosome"/>
</dbReference>
<dbReference type="GO" id="GO:0005737">
    <property type="term" value="C:cytoplasm"/>
    <property type="evidence" value="ECO:0007669"/>
    <property type="project" value="UniProtKB-SubCell"/>
</dbReference>
<dbReference type="GO" id="GO:0000774">
    <property type="term" value="F:adenyl-nucleotide exchange factor activity"/>
    <property type="evidence" value="ECO:0007669"/>
    <property type="project" value="InterPro"/>
</dbReference>
<dbReference type="GO" id="GO:0042803">
    <property type="term" value="F:protein homodimerization activity"/>
    <property type="evidence" value="ECO:0007669"/>
    <property type="project" value="InterPro"/>
</dbReference>
<dbReference type="GO" id="GO:0051087">
    <property type="term" value="F:protein-folding chaperone binding"/>
    <property type="evidence" value="ECO:0007669"/>
    <property type="project" value="InterPro"/>
</dbReference>
<dbReference type="GO" id="GO:0051082">
    <property type="term" value="F:unfolded protein binding"/>
    <property type="evidence" value="ECO:0007669"/>
    <property type="project" value="TreeGrafter"/>
</dbReference>
<dbReference type="GO" id="GO:0006457">
    <property type="term" value="P:protein folding"/>
    <property type="evidence" value="ECO:0007669"/>
    <property type="project" value="InterPro"/>
</dbReference>
<dbReference type="CDD" id="cd00446">
    <property type="entry name" value="GrpE"/>
    <property type="match status" value="1"/>
</dbReference>
<dbReference type="FunFam" id="2.30.22.10:FF:000001">
    <property type="entry name" value="Protein GrpE"/>
    <property type="match status" value="1"/>
</dbReference>
<dbReference type="Gene3D" id="3.90.20.20">
    <property type="match status" value="1"/>
</dbReference>
<dbReference type="Gene3D" id="2.30.22.10">
    <property type="entry name" value="Head domain of nucleotide exchange factor GrpE"/>
    <property type="match status" value="1"/>
</dbReference>
<dbReference type="HAMAP" id="MF_01151">
    <property type="entry name" value="GrpE"/>
    <property type="match status" value="1"/>
</dbReference>
<dbReference type="InterPro" id="IPR000740">
    <property type="entry name" value="GrpE"/>
</dbReference>
<dbReference type="InterPro" id="IPR013805">
    <property type="entry name" value="GrpE_coiled_coil"/>
</dbReference>
<dbReference type="InterPro" id="IPR009012">
    <property type="entry name" value="GrpE_head"/>
</dbReference>
<dbReference type="NCBIfam" id="NF010738">
    <property type="entry name" value="PRK14140.1"/>
    <property type="match status" value="1"/>
</dbReference>
<dbReference type="NCBIfam" id="NF010753">
    <property type="entry name" value="PRK14156.1"/>
    <property type="match status" value="1"/>
</dbReference>
<dbReference type="NCBIfam" id="NF010759">
    <property type="entry name" value="PRK14162.1"/>
    <property type="match status" value="1"/>
</dbReference>
<dbReference type="PANTHER" id="PTHR21237">
    <property type="entry name" value="GRPE PROTEIN"/>
    <property type="match status" value="1"/>
</dbReference>
<dbReference type="PANTHER" id="PTHR21237:SF23">
    <property type="entry name" value="GRPE PROTEIN HOMOLOG, MITOCHONDRIAL"/>
    <property type="match status" value="1"/>
</dbReference>
<dbReference type="Pfam" id="PF01025">
    <property type="entry name" value="GrpE"/>
    <property type="match status" value="1"/>
</dbReference>
<dbReference type="PRINTS" id="PR00773">
    <property type="entry name" value="GRPEPROTEIN"/>
</dbReference>
<dbReference type="SUPFAM" id="SSF58014">
    <property type="entry name" value="Coiled-coil domain of nucleotide exchange factor GrpE"/>
    <property type="match status" value="1"/>
</dbReference>
<dbReference type="SUPFAM" id="SSF51064">
    <property type="entry name" value="Head domain of nucleotide exchange factor GrpE"/>
    <property type="match status" value="1"/>
</dbReference>
<dbReference type="PROSITE" id="PS01071">
    <property type="entry name" value="GRPE"/>
    <property type="match status" value="1"/>
</dbReference>
<proteinExistence type="inferred from homology"/>
<organism>
    <name type="scientific">Streptococcus mutans serotype c (strain ATCC 700610 / UA159)</name>
    <dbReference type="NCBI Taxonomy" id="210007"/>
    <lineage>
        <taxon>Bacteria</taxon>
        <taxon>Bacillati</taxon>
        <taxon>Bacillota</taxon>
        <taxon>Bacilli</taxon>
        <taxon>Lactobacillales</taxon>
        <taxon>Streptococcaceae</taxon>
        <taxon>Streptococcus</taxon>
    </lineage>
</organism>
<comment type="function">
    <text evidence="1">Participates actively in the response to hyperosmotic and heat shock by preventing the aggregation of stress-denatured proteins, in association with DnaK and GrpE. It is the nucleotide exchange factor for DnaK and may function as a thermosensor. Unfolded proteins bind initially to DnaJ; upon interaction with the DnaJ-bound protein, DnaK hydrolyzes its bound ATP, resulting in the formation of a stable complex. GrpE releases ADP from DnaK; ATP binding to DnaK triggers the release of the substrate protein, thus completing the reaction cycle. Several rounds of ATP-dependent interactions between DnaJ, DnaK and GrpE are required for fully efficient folding.</text>
</comment>
<comment type="subunit">
    <text evidence="1">Homodimer.</text>
</comment>
<comment type="subcellular location">
    <subcellularLocation>
        <location evidence="1">Cytoplasm</location>
    </subcellularLocation>
</comment>
<comment type="similarity">
    <text evidence="1">Belongs to the GrpE family.</text>
</comment>
<keyword id="KW-0143">Chaperone</keyword>
<keyword id="KW-0963">Cytoplasm</keyword>
<keyword id="KW-1185">Reference proteome</keyword>
<keyword id="KW-0346">Stress response</keyword>
<gene>
    <name evidence="1" type="primary">grpE</name>
    <name type="ordered locus">SMU_81</name>
</gene>
<reference key="1">
    <citation type="journal article" date="1997" name="Mol. Microbiol.">
        <title>Transcriptional analysis of the Streptococcus mutans hrcA, grpE and dnaK genes and regulation of expression in response to heat shock and environmental acidification.</title>
        <authorList>
            <person name="Jayaraman G.C."/>
            <person name="Penders J.E."/>
            <person name="Burne R.A."/>
        </authorList>
    </citation>
    <scope>NUCLEOTIDE SEQUENCE [GENOMIC DNA]</scope>
    <source>
        <strain>GS-5</strain>
    </source>
</reference>
<reference key="2">
    <citation type="journal article" date="2002" name="Proc. Natl. Acad. Sci. U.S.A.">
        <title>Genome sequence of Streptococcus mutans UA159, a cariogenic dental pathogen.</title>
        <authorList>
            <person name="Ajdic D.J."/>
            <person name="McShan W.M."/>
            <person name="McLaughlin R.E."/>
            <person name="Savic G."/>
            <person name="Chang J."/>
            <person name="Carson M.B."/>
            <person name="Primeaux C."/>
            <person name="Tian R."/>
            <person name="Kenton S."/>
            <person name="Jia H.G."/>
            <person name="Lin S.P."/>
            <person name="Qian Y."/>
            <person name="Li S."/>
            <person name="Zhu H."/>
            <person name="Najar F.Z."/>
            <person name="Lai H."/>
            <person name="White J."/>
            <person name="Roe B.A."/>
            <person name="Ferretti J.J."/>
        </authorList>
    </citation>
    <scope>NUCLEOTIDE SEQUENCE [LARGE SCALE GENOMIC DNA]</scope>
    <source>
        <strain>ATCC 700610 / UA159</strain>
    </source>
</reference>